<gene>
    <name type="primary">srx-45</name>
    <name type="ORF">K01B6.2</name>
</gene>
<feature type="chain" id="PRO_0000070115" description="Serpentine receptor class X 45">
    <location>
        <begin position="1"/>
        <end position="361"/>
    </location>
</feature>
<feature type="transmembrane region" description="Helical; Name=1" evidence="1">
    <location>
        <begin position="20"/>
        <end position="40"/>
    </location>
</feature>
<feature type="transmembrane region" description="Helical; Name=2" evidence="1">
    <location>
        <begin position="58"/>
        <end position="78"/>
    </location>
</feature>
<feature type="transmembrane region" description="Helical; Name=3" evidence="1">
    <location>
        <begin position="92"/>
        <end position="112"/>
    </location>
</feature>
<feature type="transmembrane region" description="Helical; Name=4" evidence="1">
    <location>
        <begin position="133"/>
        <end position="153"/>
    </location>
</feature>
<feature type="transmembrane region" description="Helical; Name=5" evidence="1">
    <location>
        <begin position="176"/>
        <end position="196"/>
    </location>
</feature>
<feature type="transmembrane region" description="Helical; Name=6" evidence="1">
    <location>
        <begin position="242"/>
        <end position="262"/>
    </location>
</feature>
<feature type="transmembrane region" description="Helical; Name=7" evidence="1">
    <location>
        <begin position="278"/>
        <end position="298"/>
    </location>
</feature>
<feature type="glycosylation site" description="N-linked (GlcNAc...) asparagine" evidence="1">
    <location>
        <position position="317"/>
    </location>
</feature>
<comment type="subcellular location">
    <subcellularLocation>
        <location evidence="3">Cell membrane</location>
        <topology evidence="3">Multi-pass membrane protein</topology>
    </subcellularLocation>
</comment>
<comment type="similarity">
    <text evidence="2">Belongs to the G-protein coupled receptor 1 family.</text>
</comment>
<name>SRX45_CAEEL</name>
<organism>
    <name type="scientific">Caenorhabditis elegans</name>
    <dbReference type="NCBI Taxonomy" id="6239"/>
    <lineage>
        <taxon>Eukaryota</taxon>
        <taxon>Metazoa</taxon>
        <taxon>Ecdysozoa</taxon>
        <taxon>Nematoda</taxon>
        <taxon>Chromadorea</taxon>
        <taxon>Rhabditida</taxon>
        <taxon>Rhabditina</taxon>
        <taxon>Rhabditomorpha</taxon>
        <taxon>Rhabditoidea</taxon>
        <taxon>Rhabditidae</taxon>
        <taxon>Peloderinae</taxon>
        <taxon>Caenorhabditis</taxon>
    </lineage>
</organism>
<accession>P34490</accession>
<keyword id="KW-1003">Cell membrane</keyword>
<keyword id="KW-0297">G-protein coupled receptor</keyword>
<keyword id="KW-0325">Glycoprotein</keyword>
<keyword id="KW-0472">Membrane</keyword>
<keyword id="KW-0675">Receptor</keyword>
<keyword id="KW-1185">Reference proteome</keyword>
<keyword id="KW-0807">Transducer</keyword>
<keyword id="KW-0812">Transmembrane</keyword>
<keyword id="KW-1133">Transmembrane helix</keyword>
<dbReference type="EMBL" id="Z22174">
    <property type="protein sequence ID" value="CAA80129.2"/>
    <property type="molecule type" value="Genomic_DNA"/>
</dbReference>
<dbReference type="PIR" id="S40760">
    <property type="entry name" value="S40760"/>
</dbReference>
<dbReference type="RefSeq" id="NP_499049.2">
    <property type="nucleotide sequence ID" value="NM_066648.4"/>
</dbReference>
<dbReference type="SMR" id="P34490"/>
<dbReference type="GlyCosmos" id="P34490">
    <property type="glycosylation" value="1 site, No reported glycans"/>
</dbReference>
<dbReference type="PaxDb" id="6239-K01B6.2"/>
<dbReference type="EnsemblMetazoa" id="K01B6.2.1">
    <property type="protein sequence ID" value="K01B6.2.1"/>
    <property type="gene ID" value="WBGene00005936"/>
</dbReference>
<dbReference type="GeneID" id="186838"/>
<dbReference type="KEGG" id="cel:CELE_K01B6.2"/>
<dbReference type="UCSC" id="K01B6.2">
    <property type="organism name" value="c. elegans"/>
</dbReference>
<dbReference type="AGR" id="WB:WBGene00005936"/>
<dbReference type="CTD" id="186838"/>
<dbReference type="WormBase" id="K01B6.2">
    <property type="protein sequence ID" value="CE37779"/>
    <property type="gene ID" value="WBGene00005936"/>
    <property type="gene designation" value="srx-45"/>
</dbReference>
<dbReference type="eggNOG" id="ENOG502SY4S">
    <property type="taxonomic scope" value="Eukaryota"/>
</dbReference>
<dbReference type="GeneTree" id="ENSGT00970000195834"/>
<dbReference type="HOGENOM" id="CLU_059630_3_1_1"/>
<dbReference type="InParanoid" id="P34490"/>
<dbReference type="OMA" id="VSPPCEM"/>
<dbReference type="OrthoDB" id="5829222at2759"/>
<dbReference type="PhylomeDB" id="P34490"/>
<dbReference type="PRO" id="PR:P34490"/>
<dbReference type="Proteomes" id="UP000001940">
    <property type="component" value="Chromosome III"/>
</dbReference>
<dbReference type="Bgee" id="WBGene00005936">
    <property type="expression patterns" value="Expressed in larva and 3 other cell types or tissues"/>
</dbReference>
<dbReference type="GO" id="GO:0005886">
    <property type="term" value="C:plasma membrane"/>
    <property type="evidence" value="ECO:0007669"/>
    <property type="project" value="UniProtKB-SubCell"/>
</dbReference>
<dbReference type="GO" id="GO:0004930">
    <property type="term" value="F:G protein-coupled receptor activity"/>
    <property type="evidence" value="ECO:0007669"/>
    <property type="project" value="UniProtKB-KW"/>
</dbReference>
<dbReference type="CDD" id="cd00637">
    <property type="entry name" value="7tm_classA_rhodopsin-like"/>
    <property type="match status" value="1"/>
</dbReference>
<dbReference type="Gene3D" id="1.20.1070.10">
    <property type="entry name" value="Rhodopsin 7-helix transmembrane proteins"/>
    <property type="match status" value="1"/>
</dbReference>
<dbReference type="InterPro" id="IPR019430">
    <property type="entry name" value="7TM_GPCR_serpentine_rcpt_Srx"/>
</dbReference>
<dbReference type="InterPro" id="IPR017452">
    <property type="entry name" value="GPCR_Rhodpsn_7TM"/>
</dbReference>
<dbReference type="PANTHER" id="PTHR23017:SF25">
    <property type="entry name" value="SERPENTINE RECEPTOR CLASS X 45"/>
    <property type="match status" value="1"/>
</dbReference>
<dbReference type="PANTHER" id="PTHR23017">
    <property type="entry name" value="SERPENTINE RECEPTOR, CLASS X"/>
    <property type="match status" value="1"/>
</dbReference>
<dbReference type="Pfam" id="PF10328">
    <property type="entry name" value="7TM_GPCR_Srx"/>
    <property type="match status" value="1"/>
</dbReference>
<dbReference type="SUPFAM" id="SSF81321">
    <property type="entry name" value="Family A G protein-coupled receptor-like"/>
    <property type="match status" value="1"/>
</dbReference>
<dbReference type="PROSITE" id="PS50262">
    <property type="entry name" value="G_PROTEIN_RECEP_F1_2"/>
    <property type="match status" value="1"/>
</dbReference>
<reference key="1">
    <citation type="journal article" date="1994" name="Nature">
        <title>2.2 Mb of contiguous nucleotide sequence from chromosome III of C. elegans.</title>
        <authorList>
            <person name="Wilson R."/>
            <person name="Ainscough R."/>
            <person name="Anderson K."/>
            <person name="Baynes C."/>
            <person name="Berks M."/>
            <person name="Bonfield J."/>
            <person name="Burton J."/>
            <person name="Connell M."/>
            <person name="Copsey T."/>
            <person name="Cooper J."/>
            <person name="Coulson A."/>
            <person name="Craxton M."/>
            <person name="Dear S."/>
            <person name="Du Z."/>
            <person name="Durbin R."/>
            <person name="Favello A."/>
            <person name="Fraser A."/>
            <person name="Fulton L."/>
            <person name="Gardner A."/>
            <person name="Green P."/>
            <person name="Hawkins T."/>
            <person name="Hillier L."/>
            <person name="Jier M."/>
            <person name="Johnston L."/>
            <person name="Jones M."/>
            <person name="Kershaw J."/>
            <person name="Kirsten J."/>
            <person name="Laisster N."/>
            <person name="Latreille P."/>
            <person name="Lightning J."/>
            <person name="Lloyd C."/>
            <person name="Mortimore B."/>
            <person name="O'Callaghan M."/>
            <person name="Parsons J."/>
            <person name="Percy C."/>
            <person name="Rifken L."/>
            <person name="Roopra A."/>
            <person name="Saunders D."/>
            <person name="Shownkeen R."/>
            <person name="Sims M."/>
            <person name="Smaldon N."/>
            <person name="Smith A."/>
            <person name="Smith M."/>
            <person name="Sonnhammer E."/>
            <person name="Staden R."/>
            <person name="Sulston J."/>
            <person name="Thierry-Mieg J."/>
            <person name="Thomas K."/>
            <person name="Vaudin M."/>
            <person name="Vaughan K."/>
            <person name="Waterston R."/>
            <person name="Watson A."/>
            <person name="Weinstock L."/>
            <person name="Wilkinson-Sproat J."/>
            <person name="Wohldman P."/>
        </authorList>
    </citation>
    <scope>NUCLEOTIDE SEQUENCE [LARGE SCALE GENOMIC DNA]</scope>
    <source>
        <strain>Bristol N2</strain>
    </source>
</reference>
<reference key="2">
    <citation type="journal article" date="1998" name="Science">
        <title>Genome sequence of the nematode C. elegans: a platform for investigating biology.</title>
        <authorList>
            <consortium name="The C. elegans sequencing consortium"/>
        </authorList>
    </citation>
    <scope>NUCLEOTIDE SEQUENCE [LARGE SCALE GENOMIC DNA]</scope>
    <source>
        <strain>Bristol N2</strain>
    </source>
</reference>
<protein>
    <recommendedName>
        <fullName>Serpentine receptor class X 45</fullName>
        <shortName>Protein srx-45</shortName>
    </recommendedName>
</protein>
<sequence>MFQILMENVEVQHIDRIAALLIFFTSFIGFACNTFIAFYIRRLSLLRNSFGRLLQLQAAGDAVFVLVWAFYFAPVLFFDIKPLQSLAIAARFAQLCLICYDISIYTHLVISLNRFISLYFPTSYQNIFTERFTTFLICSIIFVSFGFSWFLVIRDCQMGFSIPRWMLDYVSPPCEMINVYYAEFFRGLIVISMFAITNSFTFCRMHMHNRKKQTATVFETTQQKKRRAVETRFVQQVTMQGLLYVIELVTYFYISLRFPVPLEPVELAKSSNRWPNFLLTTYAWILVHALDGVITLIFNKQFRSVLRHPCRSQEALNISKTPSRRSRFTTNRDESNRKKSSILACTFISNSNTGYGSSVHV</sequence>
<proteinExistence type="inferred from homology"/>
<evidence type="ECO:0000255" key="1"/>
<evidence type="ECO:0000255" key="2">
    <source>
        <dbReference type="PROSITE-ProRule" id="PRU00521"/>
    </source>
</evidence>
<evidence type="ECO:0000305" key="3"/>